<name>KDPB_ECOK1</name>
<comment type="function">
    <text evidence="1">Part of the high-affinity ATP-driven potassium transport (or Kdp) system, which catalyzes the hydrolysis of ATP coupled with the electrogenic transport of potassium into the cytoplasm. This subunit is responsible for energy coupling to the transport system and for the release of the potassium ions to the cytoplasm.</text>
</comment>
<comment type="catalytic activity">
    <reaction evidence="1">
        <text>K(+)(out) + ATP + H2O = K(+)(in) + ADP + phosphate + H(+)</text>
        <dbReference type="Rhea" id="RHEA:16777"/>
        <dbReference type="ChEBI" id="CHEBI:15377"/>
        <dbReference type="ChEBI" id="CHEBI:15378"/>
        <dbReference type="ChEBI" id="CHEBI:29103"/>
        <dbReference type="ChEBI" id="CHEBI:30616"/>
        <dbReference type="ChEBI" id="CHEBI:43474"/>
        <dbReference type="ChEBI" id="CHEBI:456216"/>
        <dbReference type="EC" id="7.2.2.6"/>
    </reaction>
    <physiologicalReaction direction="left-to-right" evidence="1">
        <dbReference type="Rhea" id="RHEA:16778"/>
    </physiologicalReaction>
</comment>
<comment type="subunit">
    <text evidence="1">The system is composed of three essential subunits: KdpA, KdpB and KdpC.</text>
</comment>
<comment type="subcellular location">
    <subcellularLocation>
        <location evidence="1">Cell inner membrane</location>
        <topology evidence="1">Multi-pass membrane protein</topology>
    </subcellularLocation>
</comment>
<comment type="similarity">
    <text evidence="1">Belongs to the cation transport ATPase (P-type) (TC 3.A.3) family. Type IA subfamily.</text>
</comment>
<protein>
    <recommendedName>
        <fullName evidence="1">Potassium-transporting ATPase ATP-binding subunit</fullName>
        <ecNumber evidence="1">7.2.2.6</ecNumber>
    </recommendedName>
    <alternativeName>
        <fullName evidence="1">ATP phosphohydrolase [potassium-transporting] B chain</fullName>
    </alternativeName>
    <alternativeName>
        <fullName evidence="1">Potassium-binding and translocating subunit B</fullName>
    </alternativeName>
    <alternativeName>
        <fullName evidence="1">Potassium-translocating ATPase B chain</fullName>
    </alternativeName>
</protein>
<dbReference type="EC" id="7.2.2.6" evidence="1"/>
<dbReference type="EMBL" id="CP000468">
    <property type="protein sequence ID" value="ABJ00101.1"/>
    <property type="molecule type" value="Genomic_DNA"/>
</dbReference>
<dbReference type="RefSeq" id="WP_000087931.1">
    <property type="nucleotide sequence ID" value="NZ_CADILS010000005.1"/>
</dbReference>
<dbReference type="BMRB" id="A1A8W1"/>
<dbReference type="SMR" id="A1A8W1"/>
<dbReference type="KEGG" id="ecv:APECO1_1370"/>
<dbReference type="HOGENOM" id="CLU_025728_2_0_6"/>
<dbReference type="Proteomes" id="UP000008216">
    <property type="component" value="Chromosome"/>
</dbReference>
<dbReference type="GO" id="GO:0005886">
    <property type="term" value="C:plasma membrane"/>
    <property type="evidence" value="ECO:0007669"/>
    <property type="project" value="UniProtKB-SubCell"/>
</dbReference>
<dbReference type="GO" id="GO:0005524">
    <property type="term" value="F:ATP binding"/>
    <property type="evidence" value="ECO:0007669"/>
    <property type="project" value="UniProtKB-UniRule"/>
</dbReference>
<dbReference type="GO" id="GO:0016887">
    <property type="term" value="F:ATP hydrolysis activity"/>
    <property type="evidence" value="ECO:0007669"/>
    <property type="project" value="InterPro"/>
</dbReference>
<dbReference type="GO" id="GO:0000287">
    <property type="term" value="F:magnesium ion binding"/>
    <property type="evidence" value="ECO:0007669"/>
    <property type="project" value="UniProtKB-UniRule"/>
</dbReference>
<dbReference type="GO" id="GO:0008556">
    <property type="term" value="F:P-type potassium transmembrane transporter activity"/>
    <property type="evidence" value="ECO:0007669"/>
    <property type="project" value="UniProtKB-UniRule"/>
</dbReference>
<dbReference type="CDD" id="cd02078">
    <property type="entry name" value="P-type_ATPase_K"/>
    <property type="match status" value="1"/>
</dbReference>
<dbReference type="FunFam" id="2.70.150.10:FF:000010">
    <property type="entry name" value="Potassium-transporting ATPase ATP-binding subunit"/>
    <property type="match status" value="1"/>
</dbReference>
<dbReference type="FunFam" id="3.40.1110.10:FF:000007">
    <property type="entry name" value="Potassium-transporting ATPase ATP-binding subunit"/>
    <property type="match status" value="1"/>
</dbReference>
<dbReference type="Gene3D" id="3.40.1110.10">
    <property type="entry name" value="Calcium-transporting ATPase, cytoplasmic domain N"/>
    <property type="match status" value="1"/>
</dbReference>
<dbReference type="Gene3D" id="2.70.150.10">
    <property type="entry name" value="Calcium-transporting ATPase, cytoplasmic transduction domain A"/>
    <property type="match status" value="1"/>
</dbReference>
<dbReference type="Gene3D" id="3.40.50.1000">
    <property type="entry name" value="HAD superfamily/HAD-like"/>
    <property type="match status" value="1"/>
</dbReference>
<dbReference type="HAMAP" id="MF_00285">
    <property type="entry name" value="KdpB"/>
    <property type="match status" value="1"/>
</dbReference>
<dbReference type="InterPro" id="IPR023299">
    <property type="entry name" value="ATPase_P-typ_cyto_dom_N"/>
</dbReference>
<dbReference type="InterPro" id="IPR018303">
    <property type="entry name" value="ATPase_P-typ_P_site"/>
</dbReference>
<dbReference type="InterPro" id="IPR023298">
    <property type="entry name" value="ATPase_P-typ_TM_dom_sf"/>
</dbReference>
<dbReference type="InterPro" id="IPR008250">
    <property type="entry name" value="ATPase_P-typ_transduc_dom_A_sf"/>
</dbReference>
<dbReference type="InterPro" id="IPR036412">
    <property type="entry name" value="HAD-like_sf"/>
</dbReference>
<dbReference type="InterPro" id="IPR023214">
    <property type="entry name" value="HAD_sf"/>
</dbReference>
<dbReference type="InterPro" id="IPR006391">
    <property type="entry name" value="P-type_ATPase_bsu_IA"/>
</dbReference>
<dbReference type="InterPro" id="IPR001757">
    <property type="entry name" value="P_typ_ATPase"/>
</dbReference>
<dbReference type="InterPro" id="IPR044492">
    <property type="entry name" value="P_typ_ATPase_HD_dom"/>
</dbReference>
<dbReference type="NCBIfam" id="TIGR01494">
    <property type="entry name" value="ATPase_P-type"/>
    <property type="match status" value="2"/>
</dbReference>
<dbReference type="NCBIfam" id="TIGR01497">
    <property type="entry name" value="kdpB"/>
    <property type="match status" value="1"/>
</dbReference>
<dbReference type="PANTHER" id="PTHR43743">
    <property type="entry name" value="POTASSIUM-TRANSPORTING ATPASE ATP-BINDING SUBUNIT"/>
    <property type="match status" value="1"/>
</dbReference>
<dbReference type="PANTHER" id="PTHR43743:SF1">
    <property type="entry name" value="POTASSIUM-TRANSPORTING ATPASE ATP-BINDING SUBUNIT"/>
    <property type="match status" value="1"/>
</dbReference>
<dbReference type="Pfam" id="PF00122">
    <property type="entry name" value="E1-E2_ATPase"/>
    <property type="match status" value="1"/>
</dbReference>
<dbReference type="Pfam" id="PF00702">
    <property type="entry name" value="Hydrolase"/>
    <property type="match status" value="1"/>
</dbReference>
<dbReference type="PRINTS" id="PR00119">
    <property type="entry name" value="CATATPASE"/>
</dbReference>
<dbReference type="SFLD" id="SFLDS00003">
    <property type="entry name" value="Haloacid_Dehalogenase"/>
    <property type="match status" value="1"/>
</dbReference>
<dbReference type="SFLD" id="SFLDF00027">
    <property type="entry name" value="p-type_atpase"/>
    <property type="match status" value="1"/>
</dbReference>
<dbReference type="SUPFAM" id="SSF81653">
    <property type="entry name" value="Calcium ATPase, transduction domain A"/>
    <property type="match status" value="1"/>
</dbReference>
<dbReference type="SUPFAM" id="SSF81665">
    <property type="entry name" value="Calcium ATPase, transmembrane domain M"/>
    <property type="match status" value="1"/>
</dbReference>
<dbReference type="SUPFAM" id="SSF56784">
    <property type="entry name" value="HAD-like"/>
    <property type="match status" value="1"/>
</dbReference>
<dbReference type="SUPFAM" id="SSF81660">
    <property type="entry name" value="Metal cation-transporting ATPase, ATP-binding domain N"/>
    <property type="match status" value="1"/>
</dbReference>
<dbReference type="PROSITE" id="PS00154">
    <property type="entry name" value="ATPASE_E1_E2"/>
    <property type="match status" value="1"/>
</dbReference>
<reference key="1">
    <citation type="journal article" date="2007" name="J. Bacteriol.">
        <title>The genome sequence of avian pathogenic Escherichia coli strain O1:K1:H7 shares strong similarities with human extraintestinal pathogenic E. coli genomes.</title>
        <authorList>
            <person name="Johnson T.J."/>
            <person name="Kariyawasam S."/>
            <person name="Wannemuehler Y."/>
            <person name="Mangiamele P."/>
            <person name="Johnson S.J."/>
            <person name="Doetkott C."/>
            <person name="Skyberg J.A."/>
            <person name="Lynne A.M."/>
            <person name="Johnson J.R."/>
            <person name="Nolan L.K."/>
        </authorList>
    </citation>
    <scope>NUCLEOTIDE SEQUENCE [LARGE SCALE GENOMIC DNA]</scope>
</reference>
<accession>A1A8W1</accession>
<proteinExistence type="inferred from homology"/>
<feature type="chain" id="PRO_1000022438" description="Potassium-transporting ATPase ATP-binding subunit">
    <location>
        <begin position="1"/>
        <end position="682"/>
    </location>
</feature>
<feature type="transmembrane region" description="Helical" evidence="1">
    <location>
        <begin position="34"/>
        <end position="54"/>
    </location>
</feature>
<feature type="transmembrane region" description="Helical" evidence="1">
    <location>
        <begin position="62"/>
        <end position="82"/>
    </location>
</feature>
<feature type="transmembrane region" description="Helical" evidence="1">
    <location>
        <begin position="219"/>
        <end position="239"/>
    </location>
</feature>
<feature type="transmembrane region" description="Helical" evidence="1">
    <location>
        <begin position="254"/>
        <end position="274"/>
    </location>
</feature>
<feature type="transmembrane region" description="Helical" evidence="1">
    <location>
        <begin position="588"/>
        <end position="608"/>
    </location>
</feature>
<feature type="transmembrane region" description="Helical" evidence="1">
    <location>
        <begin position="616"/>
        <end position="636"/>
    </location>
</feature>
<feature type="transmembrane region" description="Helical" evidence="1">
    <location>
        <begin position="656"/>
        <end position="676"/>
    </location>
</feature>
<feature type="active site" description="4-aspartylphosphate intermediate" evidence="1">
    <location>
        <position position="307"/>
    </location>
</feature>
<feature type="binding site" evidence="1">
    <location>
        <position position="344"/>
    </location>
    <ligand>
        <name>ATP</name>
        <dbReference type="ChEBI" id="CHEBI:30616"/>
    </ligand>
</feature>
<feature type="binding site" evidence="1">
    <location>
        <position position="348"/>
    </location>
    <ligand>
        <name>ATP</name>
        <dbReference type="ChEBI" id="CHEBI:30616"/>
    </ligand>
</feature>
<feature type="binding site" evidence="1">
    <location>
        <begin position="377"/>
        <end position="384"/>
    </location>
    <ligand>
        <name>ATP</name>
        <dbReference type="ChEBI" id="CHEBI:30616"/>
    </ligand>
</feature>
<feature type="binding site" evidence="1">
    <location>
        <position position="395"/>
    </location>
    <ligand>
        <name>ATP</name>
        <dbReference type="ChEBI" id="CHEBI:30616"/>
    </ligand>
</feature>
<feature type="binding site" evidence="1">
    <location>
        <position position="518"/>
    </location>
    <ligand>
        <name>Mg(2+)</name>
        <dbReference type="ChEBI" id="CHEBI:18420"/>
    </ligand>
</feature>
<feature type="binding site" evidence="1">
    <location>
        <position position="522"/>
    </location>
    <ligand>
        <name>Mg(2+)</name>
        <dbReference type="ChEBI" id="CHEBI:18420"/>
    </ligand>
</feature>
<sequence>MSRKQLALFEPTLVVQALKEAVKKLNPQAQWRNPVMFIVWIGSLLTTCISIAMASDVMPGNALFSAAISGWLWVTVLFANFAEALAEGRSKAQANSLKGVKKTAFARKLREPKYGAAADKVPADQLRKGDIVLVEASDIIPCDGEVIEGGASVDESAITGESAPVIRESGGDFASVTGGTRILSDWLVIECSVNPGETFLDRMIAMVEGAQRRKTPNEIALTILLIALTIVFLLATATLWPFSAWGGNAVSVTVLVALLVCLIPTTIGGLLSAIGVAGMSRMLGANVIATSGRAVEAAGDVDVLLLDKTGTITLGNRQASEFIPAQGVEEKALADAAQLASLADETPEGRSIVILAKQRFNLRERDVQSLHATFVPFTAQSRMSGINIDNRMIRKGSVDAIRRHVEANGGHFPADVDQKVDQVARQGATPLVVVEGSRVLGVIALKDIVKGGIKERFAQLRKMGIKTVMITGDNRLTAAAIAAEAGVDDFLAEATPEAKLALIRQYQAEGRLVAMTGDGTNDAPALAQADVAVAMNSGTQAAKEAGNMVDLDSNPTKLIEVVHIGKQMLMTRGSLTTFSIANDVAKYFAIIPAAFAATYPQLNALNIMRLHSPDSAILSAVIFNALIIVFLIPLALKGVSYKPLTASAMLRRNLWIYGLGGLLVPFIGIKVIDLLLTVCGLV</sequence>
<evidence type="ECO:0000255" key="1">
    <source>
        <dbReference type="HAMAP-Rule" id="MF_00285"/>
    </source>
</evidence>
<organism>
    <name type="scientific">Escherichia coli O1:K1 / APEC</name>
    <dbReference type="NCBI Taxonomy" id="405955"/>
    <lineage>
        <taxon>Bacteria</taxon>
        <taxon>Pseudomonadati</taxon>
        <taxon>Pseudomonadota</taxon>
        <taxon>Gammaproteobacteria</taxon>
        <taxon>Enterobacterales</taxon>
        <taxon>Enterobacteriaceae</taxon>
        <taxon>Escherichia</taxon>
    </lineage>
</organism>
<gene>
    <name evidence="1" type="primary">kdpB</name>
    <name type="ordered locus">Ecok1_06070</name>
    <name type="ORF">APECO1_1370</name>
</gene>
<keyword id="KW-0067">ATP-binding</keyword>
<keyword id="KW-0997">Cell inner membrane</keyword>
<keyword id="KW-1003">Cell membrane</keyword>
<keyword id="KW-0406">Ion transport</keyword>
<keyword id="KW-0460">Magnesium</keyword>
<keyword id="KW-0472">Membrane</keyword>
<keyword id="KW-0479">Metal-binding</keyword>
<keyword id="KW-0547">Nucleotide-binding</keyword>
<keyword id="KW-0597">Phosphoprotein</keyword>
<keyword id="KW-0630">Potassium</keyword>
<keyword id="KW-0633">Potassium transport</keyword>
<keyword id="KW-1185">Reference proteome</keyword>
<keyword id="KW-1278">Translocase</keyword>
<keyword id="KW-0812">Transmembrane</keyword>
<keyword id="KW-1133">Transmembrane helix</keyword>
<keyword id="KW-0813">Transport</keyword>